<feature type="chain" id="PRO_0000193014" description="Anaerobic nitrite reductase HB1">
    <location>
        <begin position="1"/>
        <end position="163"/>
    </location>
</feature>
<feature type="domain" description="Globin" evidence="5">
    <location>
        <begin position="8"/>
        <end position="157"/>
    </location>
</feature>
<feature type="short sequence motif" description="Homodimerization" evidence="2">
    <location>
        <begin position="41"/>
        <end position="45"/>
    </location>
</feature>
<feature type="short sequence motif" description="Homodimerization" evidence="2">
    <location>
        <begin position="111"/>
        <end position="123"/>
    </location>
</feature>
<feature type="binding site" evidence="3">
    <location>
        <position position="51"/>
    </location>
    <ligand>
        <name>heme b</name>
        <dbReference type="ChEBI" id="CHEBI:60344"/>
    </ligand>
</feature>
<feature type="binding site" evidence="2">
    <location>
        <position position="65"/>
    </location>
    <ligand>
        <name>heme b</name>
        <dbReference type="ChEBI" id="CHEBI:60344"/>
    </ligand>
</feature>
<feature type="binding site" description="distal binding residue" evidence="5">
    <location>
        <position position="69"/>
    </location>
    <ligand>
        <name>heme b</name>
        <dbReference type="ChEBI" id="CHEBI:60344"/>
    </ligand>
    <ligandPart>
        <name>Fe</name>
        <dbReference type="ChEBI" id="CHEBI:18248"/>
    </ligandPart>
</feature>
<feature type="binding site" evidence="2">
    <location>
        <position position="99"/>
    </location>
    <ligand>
        <name>heme b</name>
        <dbReference type="ChEBI" id="CHEBI:60344"/>
    </ligand>
</feature>
<feature type="binding site" evidence="2">
    <location>
        <position position="103"/>
    </location>
    <ligand>
        <name>heme b</name>
        <dbReference type="ChEBI" id="CHEBI:60344"/>
    </ligand>
</feature>
<feature type="binding site" description="proximal binding residue" evidence="5">
    <location>
        <position position="104"/>
    </location>
    <ligand>
        <name>heme b</name>
        <dbReference type="ChEBI" id="CHEBI:60344"/>
    </ligand>
    <ligandPart>
        <name>Fe</name>
        <dbReference type="ChEBI" id="CHEBI:18248"/>
    </ligandPart>
</feature>
<feature type="site" description="Homodimerization" evidence="2">
    <location>
        <position position="138"/>
    </location>
</feature>
<organism>
    <name type="scientific">Gossypium hirsutum</name>
    <name type="common">Upland cotton</name>
    <name type="synonym">Gossypium mexicanum</name>
    <dbReference type="NCBI Taxonomy" id="3635"/>
    <lineage>
        <taxon>Eukaryota</taxon>
        <taxon>Viridiplantae</taxon>
        <taxon>Streptophyta</taxon>
        <taxon>Embryophyta</taxon>
        <taxon>Tracheophyta</taxon>
        <taxon>Spermatophyta</taxon>
        <taxon>Magnoliopsida</taxon>
        <taxon>eudicotyledons</taxon>
        <taxon>Gunneridae</taxon>
        <taxon>Pentapetalae</taxon>
        <taxon>rosids</taxon>
        <taxon>malvids</taxon>
        <taxon>Malvales</taxon>
        <taxon>Malvaceae</taxon>
        <taxon>Malvoideae</taxon>
        <taxon>Gossypium</taxon>
    </lineage>
</organism>
<comment type="function">
    <text evidence="2 4">Phytoglobin that reduces nitrite to nitric oxide (NO) under anoxic conditions (e.g. during flooding or in waterlogged soil) (By similarity). May not function as an oxygen storage or transport protein (By similarity). Has an unusually high affinity for O(2) through an hexacoordinate heme iron because of a very low dissociation constant (By similarity).</text>
</comment>
<comment type="catalytic activity">
    <reaction evidence="2">
        <text>Fe(III)-heme b-[protein] + nitric oxide + H2O = Fe(II)-heme b-[protein] + nitrite + 2 H(+)</text>
        <dbReference type="Rhea" id="RHEA:77711"/>
        <dbReference type="Rhea" id="RHEA-COMP:18975"/>
        <dbReference type="Rhea" id="RHEA-COMP:18976"/>
        <dbReference type="ChEBI" id="CHEBI:15377"/>
        <dbReference type="ChEBI" id="CHEBI:15378"/>
        <dbReference type="ChEBI" id="CHEBI:16301"/>
        <dbReference type="ChEBI" id="CHEBI:16480"/>
        <dbReference type="ChEBI" id="CHEBI:55376"/>
        <dbReference type="ChEBI" id="CHEBI:60344"/>
    </reaction>
    <physiologicalReaction direction="right-to-left" evidence="2">
        <dbReference type="Rhea" id="RHEA:77713"/>
    </physiologicalReaction>
</comment>
<comment type="cofactor">
    <cofactor evidence="3">
        <name>heme b</name>
        <dbReference type="ChEBI" id="CHEBI:60344"/>
    </cofactor>
    <text evidence="3">Binds 1 heme group per subunit.</text>
</comment>
<comment type="subunit">
    <text evidence="2">Homodimer.</text>
</comment>
<comment type="subcellular location">
    <subcellularLocation>
        <location evidence="1">Cytoplasm</location>
    </subcellularLocation>
    <subcellularLocation>
        <location evidence="1">Nucleus</location>
    </subcellularLocation>
</comment>
<comment type="similarity">
    <text evidence="7">Belongs to the plant globin family.</text>
</comment>
<accession>Q947C5</accession>
<name>HBL1_GOSHI</name>
<dbReference type="EC" id="1.7.2.-" evidence="2"/>
<dbReference type="EMBL" id="AF329368">
    <property type="protein sequence ID" value="AAL09463.1"/>
    <property type="molecule type" value="mRNA"/>
</dbReference>
<dbReference type="SMR" id="Q947C5"/>
<dbReference type="STRING" id="3635.Q947C5"/>
<dbReference type="PaxDb" id="3635-Q947C5"/>
<dbReference type="Proteomes" id="UP000189702">
    <property type="component" value="Unplaced"/>
</dbReference>
<dbReference type="GO" id="GO:0005737">
    <property type="term" value="C:cytoplasm"/>
    <property type="evidence" value="ECO:0007669"/>
    <property type="project" value="UniProtKB-SubCell"/>
</dbReference>
<dbReference type="GO" id="GO:0005634">
    <property type="term" value="C:nucleus"/>
    <property type="evidence" value="ECO:0007669"/>
    <property type="project" value="UniProtKB-SubCell"/>
</dbReference>
<dbReference type="GO" id="GO:0020037">
    <property type="term" value="F:heme binding"/>
    <property type="evidence" value="ECO:0007669"/>
    <property type="project" value="InterPro"/>
</dbReference>
<dbReference type="GO" id="GO:0046872">
    <property type="term" value="F:metal ion binding"/>
    <property type="evidence" value="ECO:0007669"/>
    <property type="project" value="UniProtKB-KW"/>
</dbReference>
<dbReference type="GO" id="GO:0016491">
    <property type="term" value="F:oxidoreductase activity"/>
    <property type="evidence" value="ECO:0007669"/>
    <property type="project" value="UniProtKB-KW"/>
</dbReference>
<dbReference type="GO" id="GO:0019825">
    <property type="term" value="F:oxygen binding"/>
    <property type="evidence" value="ECO:0007669"/>
    <property type="project" value="InterPro"/>
</dbReference>
<dbReference type="CDD" id="cd14784">
    <property type="entry name" value="class1_nsHb-like"/>
    <property type="match status" value="1"/>
</dbReference>
<dbReference type="FunFam" id="1.10.490.10:FF:000008">
    <property type="entry name" value="non-symbiotic hemoglobin 1"/>
    <property type="match status" value="1"/>
</dbReference>
<dbReference type="Gene3D" id="1.10.490.10">
    <property type="entry name" value="Globins"/>
    <property type="match status" value="1"/>
</dbReference>
<dbReference type="InterPro" id="IPR000971">
    <property type="entry name" value="Globin"/>
</dbReference>
<dbReference type="InterPro" id="IPR009050">
    <property type="entry name" value="Globin-like_sf"/>
</dbReference>
<dbReference type="InterPro" id="IPR012292">
    <property type="entry name" value="Globin/Proto"/>
</dbReference>
<dbReference type="InterPro" id="IPR001032">
    <property type="entry name" value="Leghaemoglobin-like"/>
</dbReference>
<dbReference type="PANTHER" id="PTHR22924">
    <property type="entry name" value="LEGHEMOGLOBIN-RELATED"/>
    <property type="match status" value="1"/>
</dbReference>
<dbReference type="PANTHER" id="PTHR22924:SF39">
    <property type="entry name" value="NON-SYMBIOTIC HEMOGLOBIN 1"/>
    <property type="match status" value="1"/>
</dbReference>
<dbReference type="Pfam" id="PF00042">
    <property type="entry name" value="Globin"/>
    <property type="match status" value="1"/>
</dbReference>
<dbReference type="PRINTS" id="PR00188">
    <property type="entry name" value="PLANTGLOBIN"/>
</dbReference>
<dbReference type="SUPFAM" id="SSF46458">
    <property type="entry name" value="Globin-like"/>
    <property type="match status" value="1"/>
</dbReference>
<dbReference type="PROSITE" id="PS01033">
    <property type="entry name" value="GLOBIN"/>
    <property type="match status" value="1"/>
</dbReference>
<protein>
    <recommendedName>
        <fullName evidence="2">Anaerobic nitrite reductase HB1</fullName>
        <ecNumber evidence="2">1.7.2.-</ecNumber>
    </recommendedName>
    <alternativeName>
        <fullName evidence="6">GOShi GLB1</fullName>
        <shortName evidence="6">Hb1</shortName>
    </alternativeName>
    <alternativeName>
        <fullName evidence="6">Non-symbiotic hemoglobin 1</fullName>
    </alternativeName>
</protein>
<reference key="1">
    <citation type="journal article" date="2001" name="Plant Mol. Biol.">
        <title>Expression and evolution of functionally distinct haemoglobin genes in plants.</title>
        <authorList>
            <person name="Hunt P.W."/>
            <person name="Watts R.A."/>
            <person name="Trevaskis B."/>
            <person name="Llewellyn D.J."/>
            <person name="Burnell J."/>
            <person name="Dennis E.S."/>
            <person name="Peacock W.J."/>
        </authorList>
    </citation>
    <scope>NUCLEOTIDE SEQUENCE [MRNA]</scope>
</reference>
<gene>
    <name evidence="6" type="primary">HB1</name>
    <name evidence="6" type="synonym">GLB1</name>
</gene>
<sequence>MATYEGKVFTEEQEALVVKSWTVMKKKTAELGLKFFLKIFEIAPSAKKLFSFLRDSNVPLEQNTKLKPHAMSVFVMTCESAVQLRKAGKVTVRESNLKKLGATHFKYGVVDEHFEVTKFALLETIKEAVPDMWSDEMKNAWGEAYDRLVAAIKIEMKACSQAA</sequence>
<evidence type="ECO:0000250" key="1">
    <source>
        <dbReference type="UniProtKB" id="A2XE98"/>
    </source>
</evidence>
<evidence type="ECO:0000250" key="2">
    <source>
        <dbReference type="UniProtKB" id="O04986"/>
    </source>
</evidence>
<evidence type="ECO:0000250" key="3">
    <source>
        <dbReference type="UniProtKB" id="P68168"/>
    </source>
</evidence>
<evidence type="ECO:0000250" key="4">
    <source>
        <dbReference type="UniProtKB" id="Q42831"/>
    </source>
</evidence>
<evidence type="ECO:0000255" key="5">
    <source>
        <dbReference type="PROSITE-ProRule" id="PRU00238"/>
    </source>
</evidence>
<evidence type="ECO:0000303" key="6">
    <source>
    </source>
</evidence>
<evidence type="ECO:0000305" key="7"/>
<proteinExistence type="evidence at transcript level"/>
<keyword id="KW-0963">Cytoplasm</keyword>
<keyword id="KW-0349">Heme</keyword>
<keyword id="KW-0408">Iron</keyword>
<keyword id="KW-0479">Metal-binding</keyword>
<keyword id="KW-0539">Nucleus</keyword>
<keyword id="KW-0560">Oxidoreductase</keyword>
<keyword id="KW-1185">Reference proteome</keyword>